<comment type="function">
    <text evidence="1">Usually encoded in the trnK tRNA gene intron. Probably assists in splicing its own and other chloroplast group II introns.</text>
</comment>
<comment type="subcellular location">
    <subcellularLocation>
        <location>Plastid</location>
        <location>Chloroplast</location>
    </subcellularLocation>
</comment>
<comment type="similarity">
    <text evidence="1">Belongs to the intron maturase 2 family. MatK subfamily.</text>
</comment>
<protein>
    <recommendedName>
        <fullName evidence="1">Maturase K</fullName>
    </recommendedName>
    <alternativeName>
        <fullName evidence="1">Intron maturase</fullName>
    </alternativeName>
</protein>
<gene>
    <name evidence="1" type="primary">matK</name>
</gene>
<accession>Q5GF63</accession>
<keyword id="KW-0150">Chloroplast</keyword>
<keyword id="KW-0507">mRNA processing</keyword>
<keyword id="KW-0934">Plastid</keyword>
<keyword id="KW-0694">RNA-binding</keyword>
<keyword id="KW-0819">tRNA processing</keyword>
<proteinExistence type="inferred from homology"/>
<reference key="1">
    <citation type="journal article" date="2004" name="Mol. Phylogenet. Evol.">
        <title>Phylogeny of Iris based on chloroplast matK gene and trnK intron sequence data.</title>
        <authorList>
            <person name="Wilson C.A."/>
        </authorList>
    </citation>
    <scope>NUCLEOTIDE SEQUENCE [GENOMIC DNA]</scope>
</reference>
<organism>
    <name type="scientific">Iris pseudacorus</name>
    <name type="common">Yellow flag</name>
    <dbReference type="NCBI Taxonomy" id="82213"/>
    <lineage>
        <taxon>Eukaryota</taxon>
        <taxon>Viridiplantae</taxon>
        <taxon>Streptophyta</taxon>
        <taxon>Embryophyta</taxon>
        <taxon>Tracheophyta</taxon>
        <taxon>Spermatophyta</taxon>
        <taxon>Magnoliopsida</taxon>
        <taxon>Liliopsida</taxon>
        <taxon>Asparagales</taxon>
        <taxon>Iridaceae</taxon>
        <taxon>Iridoideae</taxon>
        <taxon>Irideae</taxon>
        <taxon>Iris</taxon>
    </lineage>
</organism>
<feature type="chain" id="PRO_0000143437" description="Maturase K">
    <location>
        <begin position="1"/>
        <end position="526"/>
    </location>
</feature>
<sequence>MEEFPGYLEXDRSRQQPFXYPLLFQEYIYALAHNHNRGLKGSLFYGPSEVXGYDSKSSLALVKRLIIRIYQQNDFLPVVNDSNKXRFVSHHRGNFFYSHFYSXMISEGYAILVEIPFSLRLVSYFEKKEIPKSHNLRSIHSIFPFXXXXXXXXNYVSDILIPHPIHMEILVQILQCRIQDVPFLHFLPFFLHKYHNWNWNSFLITPKKSIYVFSKENKRLFRFLYNSYVSECEFLLVFLRKQSSYLRLTSFGLFLERRHFYVKIKRLQMQHLILIVVCRDYFQGTLWSFKDPFMHYVRCQGKAVLASKGTHLLMKKWKYNFVNLWQYYFNFWYQSYRIHINQLSNYSFYFLGYLSSLLKNSSMVRNQMLENSFLVDTVTNKFETLVPVIFLIGSLSKAQFCTVLGHPISKPIWADLPDSEIIERFGRMCRNLSHYHSGSSKKQGLYRIKYILRLSCARTLARKHKSTVRVFLRRLGSGLLEEFFTEEEQVLSLILPKTIPFTFYGSHKERIWYLDIIRINDLVNHS</sequence>
<dbReference type="EMBL" id="AY596643">
    <property type="protein sequence ID" value="AAW67442.1"/>
    <property type="molecule type" value="Genomic_DNA"/>
</dbReference>
<dbReference type="GO" id="GO:0009507">
    <property type="term" value="C:chloroplast"/>
    <property type="evidence" value="ECO:0007669"/>
    <property type="project" value="UniProtKB-SubCell"/>
</dbReference>
<dbReference type="GO" id="GO:0003723">
    <property type="term" value="F:RNA binding"/>
    <property type="evidence" value="ECO:0007669"/>
    <property type="project" value="UniProtKB-KW"/>
</dbReference>
<dbReference type="GO" id="GO:0006397">
    <property type="term" value="P:mRNA processing"/>
    <property type="evidence" value="ECO:0007669"/>
    <property type="project" value="UniProtKB-KW"/>
</dbReference>
<dbReference type="GO" id="GO:0008380">
    <property type="term" value="P:RNA splicing"/>
    <property type="evidence" value="ECO:0007669"/>
    <property type="project" value="UniProtKB-UniRule"/>
</dbReference>
<dbReference type="GO" id="GO:0008033">
    <property type="term" value="P:tRNA processing"/>
    <property type="evidence" value="ECO:0007669"/>
    <property type="project" value="UniProtKB-KW"/>
</dbReference>
<dbReference type="HAMAP" id="MF_01390">
    <property type="entry name" value="MatK"/>
    <property type="match status" value="1"/>
</dbReference>
<dbReference type="InterPro" id="IPR024937">
    <property type="entry name" value="Domain_X"/>
</dbReference>
<dbReference type="InterPro" id="IPR002866">
    <property type="entry name" value="Maturase_MatK"/>
</dbReference>
<dbReference type="InterPro" id="IPR024942">
    <property type="entry name" value="Maturase_MatK_N"/>
</dbReference>
<dbReference type="PANTHER" id="PTHR34811">
    <property type="entry name" value="MATURASE K"/>
    <property type="match status" value="1"/>
</dbReference>
<dbReference type="PANTHER" id="PTHR34811:SF1">
    <property type="entry name" value="MATURASE K"/>
    <property type="match status" value="1"/>
</dbReference>
<dbReference type="Pfam" id="PF01348">
    <property type="entry name" value="Intron_maturas2"/>
    <property type="match status" value="1"/>
</dbReference>
<dbReference type="Pfam" id="PF01824">
    <property type="entry name" value="MatK_N"/>
    <property type="match status" value="1"/>
</dbReference>
<evidence type="ECO:0000255" key="1">
    <source>
        <dbReference type="HAMAP-Rule" id="MF_01390"/>
    </source>
</evidence>
<geneLocation type="chloroplast"/>
<name>MATK_IRIPS</name>